<sequence>MSDQEFGLDAIRNIGIMAHIDAGKTTTTERILFYAGRTHKIGEVHEGGATMDWMEQEQERGITITSAATTVFWLGAKINIIDTPGHVDFTIEVERSLRVLDGAVAVFDAVSGVEPQSETVWRQANKYGVPRIAFVNKMDRMGANYFGAIESMREKLGANAIPVHCPIGSESQFVGMVDLISQKTLYFLEETLGAKWEEREIPEDLQEQCATLRMQLLEELATVDESNEAFMEKVLENPDSITEEEIHTVMRKGVIEGKINPVLCGSAFKNKGVQQLLDVIVKWLPSPLDRGNVRGINLKTGEEVSLKPSKDGPLAALAFKIMTDPYVGRITFIRIYSGTLKKGSAILNSTKDKKERISRLLEMHANERTDRDEFTVGDIGACVGLKFSVTGDTLCDENQEIVLERIEAPEPVIDMAIEPKSKGDREKLAQALSALSEEDPTFRVSTNEETGQTIISGMGELHLDILRDRMIREFRVEANVGKPQVSYKETITKTSNSETKYVKQSGGRGQYAHVCLEIEPNEPGKGNEVVSKIVGGVIPKEYIPAVIKGVEEGLNSGVLAGYGLVDVKVSIVFGSYHEVDSSEMAFKICGSMAVKEACRKALPVILEPIMKVTVITPEDHLGDVIGDLNRRRGKILGQESSRNMAQVSAEVPLSEMFGYMTSLRSLTSGRATSTMEPAFFAKVPQKIQEEIVKK</sequence>
<organism>
    <name type="scientific">Chlamydia trachomatis serovar A (strain ATCC VR-571B / DSM 19440 / HAR-13)</name>
    <dbReference type="NCBI Taxonomy" id="315277"/>
    <lineage>
        <taxon>Bacteria</taxon>
        <taxon>Pseudomonadati</taxon>
        <taxon>Chlamydiota</taxon>
        <taxon>Chlamydiia</taxon>
        <taxon>Chlamydiales</taxon>
        <taxon>Chlamydiaceae</taxon>
        <taxon>Chlamydia/Chlamydophila group</taxon>
        <taxon>Chlamydia</taxon>
    </lineage>
</organism>
<name>EFG_CHLTA</name>
<accession>Q3KLR3</accession>
<comment type="function">
    <text evidence="1">Catalyzes the GTP-dependent ribosomal translocation step during translation elongation. During this step, the ribosome changes from the pre-translocational (PRE) to the post-translocational (POST) state as the newly formed A-site-bound peptidyl-tRNA and P-site-bound deacylated tRNA move to the P and E sites, respectively. Catalyzes the coordinated movement of the two tRNA molecules, the mRNA and conformational changes in the ribosome.</text>
</comment>
<comment type="subcellular location">
    <subcellularLocation>
        <location evidence="1">Cytoplasm</location>
    </subcellularLocation>
</comment>
<comment type="similarity">
    <text evidence="1">Belongs to the TRAFAC class translation factor GTPase superfamily. Classic translation factor GTPase family. EF-G/EF-2 subfamily.</text>
</comment>
<proteinExistence type="inferred from homology"/>
<evidence type="ECO:0000255" key="1">
    <source>
        <dbReference type="HAMAP-Rule" id="MF_00054"/>
    </source>
</evidence>
<feature type="chain" id="PRO_0000225201" description="Elongation factor G">
    <location>
        <begin position="1"/>
        <end position="694"/>
    </location>
</feature>
<feature type="domain" description="tr-type G">
    <location>
        <begin position="9"/>
        <end position="288"/>
    </location>
</feature>
<feature type="binding site" evidence="1">
    <location>
        <begin position="18"/>
        <end position="25"/>
    </location>
    <ligand>
        <name>GTP</name>
        <dbReference type="ChEBI" id="CHEBI:37565"/>
    </ligand>
</feature>
<feature type="binding site" evidence="1">
    <location>
        <begin position="82"/>
        <end position="86"/>
    </location>
    <ligand>
        <name>GTP</name>
        <dbReference type="ChEBI" id="CHEBI:37565"/>
    </ligand>
</feature>
<feature type="binding site" evidence="1">
    <location>
        <begin position="136"/>
        <end position="139"/>
    </location>
    <ligand>
        <name>GTP</name>
        <dbReference type="ChEBI" id="CHEBI:37565"/>
    </ligand>
</feature>
<protein>
    <recommendedName>
        <fullName evidence="1">Elongation factor G</fullName>
        <shortName evidence="1">EF-G</shortName>
    </recommendedName>
</protein>
<gene>
    <name evidence="1" type="primary">fusA</name>
    <name type="ordered locus">CTA_0477</name>
</gene>
<keyword id="KW-0963">Cytoplasm</keyword>
<keyword id="KW-0251">Elongation factor</keyword>
<keyword id="KW-0342">GTP-binding</keyword>
<keyword id="KW-0547">Nucleotide-binding</keyword>
<keyword id="KW-0648">Protein biosynthesis</keyword>
<reference key="1">
    <citation type="journal article" date="2005" name="Infect. Immun.">
        <title>Comparative genomic analysis of Chlamydia trachomatis oculotropic and genitotropic strains.</title>
        <authorList>
            <person name="Carlson J.H."/>
            <person name="Porcella S.F."/>
            <person name="McClarty G."/>
            <person name="Caldwell H.D."/>
        </authorList>
    </citation>
    <scope>NUCLEOTIDE SEQUENCE [LARGE SCALE GENOMIC DNA]</scope>
    <source>
        <strain>ATCC VR-571B / DSM 19440 / HAR-13</strain>
    </source>
</reference>
<dbReference type="EMBL" id="CP000051">
    <property type="protein sequence ID" value="AAX50709.1"/>
    <property type="molecule type" value="Genomic_DNA"/>
</dbReference>
<dbReference type="RefSeq" id="WP_009871792.1">
    <property type="nucleotide sequence ID" value="NC_007429.1"/>
</dbReference>
<dbReference type="SMR" id="Q3KLR3"/>
<dbReference type="KEGG" id="cta:CTA_0477"/>
<dbReference type="HOGENOM" id="CLU_002794_4_1_0"/>
<dbReference type="Proteomes" id="UP000002532">
    <property type="component" value="Chromosome"/>
</dbReference>
<dbReference type="GO" id="GO:0005737">
    <property type="term" value="C:cytoplasm"/>
    <property type="evidence" value="ECO:0007669"/>
    <property type="project" value="UniProtKB-SubCell"/>
</dbReference>
<dbReference type="GO" id="GO:0005525">
    <property type="term" value="F:GTP binding"/>
    <property type="evidence" value="ECO:0007669"/>
    <property type="project" value="UniProtKB-UniRule"/>
</dbReference>
<dbReference type="GO" id="GO:0003924">
    <property type="term" value="F:GTPase activity"/>
    <property type="evidence" value="ECO:0007669"/>
    <property type="project" value="InterPro"/>
</dbReference>
<dbReference type="GO" id="GO:0003746">
    <property type="term" value="F:translation elongation factor activity"/>
    <property type="evidence" value="ECO:0007669"/>
    <property type="project" value="UniProtKB-UniRule"/>
</dbReference>
<dbReference type="GO" id="GO:0032790">
    <property type="term" value="P:ribosome disassembly"/>
    <property type="evidence" value="ECO:0007669"/>
    <property type="project" value="TreeGrafter"/>
</dbReference>
<dbReference type="CDD" id="cd01886">
    <property type="entry name" value="EF-G"/>
    <property type="match status" value="1"/>
</dbReference>
<dbReference type="CDD" id="cd16262">
    <property type="entry name" value="EFG_III"/>
    <property type="match status" value="1"/>
</dbReference>
<dbReference type="CDD" id="cd01434">
    <property type="entry name" value="EFG_mtEFG1_IV"/>
    <property type="match status" value="1"/>
</dbReference>
<dbReference type="CDD" id="cd03713">
    <property type="entry name" value="EFG_mtEFG_C"/>
    <property type="match status" value="1"/>
</dbReference>
<dbReference type="CDD" id="cd04088">
    <property type="entry name" value="EFG_mtEFG_II"/>
    <property type="match status" value="1"/>
</dbReference>
<dbReference type="FunFam" id="2.40.30.10:FF:000006">
    <property type="entry name" value="Elongation factor G"/>
    <property type="match status" value="1"/>
</dbReference>
<dbReference type="FunFam" id="3.30.230.10:FF:000003">
    <property type="entry name" value="Elongation factor G"/>
    <property type="match status" value="1"/>
</dbReference>
<dbReference type="FunFam" id="3.30.70.240:FF:000001">
    <property type="entry name" value="Elongation factor G"/>
    <property type="match status" value="1"/>
</dbReference>
<dbReference type="FunFam" id="3.30.70.870:FF:000001">
    <property type="entry name" value="Elongation factor G"/>
    <property type="match status" value="1"/>
</dbReference>
<dbReference type="FunFam" id="3.40.50.300:FF:000029">
    <property type="entry name" value="Elongation factor G"/>
    <property type="match status" value="1"/>
</dbReference>
<dbReference type="Gene3D" id="3.30.230.10">
    <property type="match status" value="1"/>
</dbReference>
<dbReference type="Gene3D" id="3.30.70.240">
    <property type="match status" value="1"/>
</dbReference>
<dbReference type="Gene3D" id="3.30.70.870">
    <property type="entry name" value="Elongation Factor G (Translational Gtpase), domain 3"/>
    <property type="match status" value="1"/>
</dbReference>
<dbReference type="Gene3D" id="3.40.50.300">
    <property type="entry name" value="P-loop containing nucleotide triphosphate hydrolases"/>
    <property type="match status" value="1"/>
</dbReference>
<dbReference type="Gene3D" id="2.40.30.10">
    <property type="entry name" value="Translation factors"/>
    <property type="match status" value="1"/>
</dbReference>
<dbReference type="HAMAP" id="MF_00054_B">
    <property type="entry name" value="EF_G_EF_2_B"/>
    <property type="match status" value="1"/>
</dbReference>
<dbReference type="InterPro" id="IPR041095">
    <property type="entry name" value="EFG_II"/>
</dbReference>
<dbReference type="InterPro" id="IPR009022">
    <property type="entry name" value="EFG_III"/>
</dbReference>
<dbReference type="InterPro" id="IPR035647">
    <property type="entry name" value="EFG_III/V"/>
</dbReference>
<dbReference type="InterPro" id="IPR047872">
    <property type="entry name" value="EFG_IV"/>
</dbReference>
<dbReference type="InterPro" id="IPR035649">
    <property type="entry name" value="EFG_V"/>
</dbReference>
<dbReference type="InterPro" id="IPR000640">
    <property type="entry name" value="EFG_V-like"/>
</dbReference>
<dbReference type="InterPro" id="IPR004161">
    <property type="entry name" value="EFTu-like_2"/>
</dbReference>
<dbReference type="InterPro" id="IPR031157">
    <property type="entry name" value="G_TR_CS"/>
</dbReference>
<dbReference type="InterPro" id="IPR027417">
    <property type="entry name" value="P-loop_NTPase"/>
</dbReference>
<dbReference type="InterPro" id="IPR020568">
    <property type="entry name" value="Ribosomal_Su5_D2-typ_SF"/>
</dbReference>
<dbReference type="InterPro" id="IPR014721">
    <property type="entry name" value="Ribsml_uS5_D2-typ_fold_subgr"/>
</dbReference>
<dbReference type="InterPro" id="IPR005225">
    <property type="entry name" value="Small_GTP-bd"/>
</dbReference>
<dbReference type="InterPro" id="IPR000795">
    <property type="entry name" value="T_Tr_GTP-bd_dom"/>
</dbReference>
<dbReference type="InterPro" id="IPR009000">
    <property type="entry name" value="Transl_B-barrel_sf"/>
</dbReference>
<dbReference type="InterPro" id="IPR004540">
    <property type="entry name" value="Transl_elong_EFG/EF2"/>
</dbReference>
<dbReference type="InterPro" id="IPR005517">
    <property type="entry name" value="Transl_elong_EFG/EF2_IV"/>
</dbReference>
<dbReference type="NCBIfam" id="TIGR00484">
    <property type="entry name" value="EF-G"/>
    <property type="match status" value="1"/>
</dbReference>
<dbReference type="NCBIfam" id="NF009381">
    <property type="entry name" value="PRK12740.1-5"/>
    <property type="match status" value="1"/>
</dbReference>
<dbReference type="NCBIfam" id="TIGR00231">
    <property type="entry name" value="small_GTP"/>
    <property type="match status" value="1"/>
</dbReference>
<dbReference type="PANTHER" id="PTHR43261:SF1">
    <property type="entry name" value="RIBOSOME-RELEASING FACTOR 2, MITOCHONDRIAL"/>
    <property type="match status" value="1"/>
</dbReference>
<dbReference type="PANTHER" id="PTHR43261">
    <property type="entry name" value="TRANSLATION ELONGATION FACTOR G-RELATED"/>
    <property type="match status" value="1"/>
</dbReference>
<dbReference type="Pfam" id="PF00679">
    <property type="entry name" value="EFG_C"/>
    <property type="match status" value="1"/>
</dbReference>
<dbReference type="Pfam" id="PF14492">
    <property type="entry name" value="EFG_III"/>
    <property type="match status" value="1"/>
</dbReference>
<dbReference type="Pfam" id="PF03764">
    <property type="entry name" value="EFG_IV"/>
    <property type="match status" value="1"/>
</dbReference>
<dbReference type="Pfam" id="PF00009">
    <property type="entry name" value="GTP_EFTU"/>
    <property type="match status" value="1"/>
</dbReference>
<dbReference type="Pfam" id="PF03144">
    <property type="entry name" value="GTP_EFTU_D2"/>
    <property type="match status" value="1"/>
</dbReference>
<dbReference type="PRINTS" id="PR00315">
    <property type="entry name" value="ELONGATNFCT"/>
</dbReference>
<dbReference type="SMART" id="SM00838">
    <property type="entry name" value="EFG_C"/>
    <property type="match status" value="1"/>
</dbReference>
<dbReference type="SMART" id="SM00889">
    <property type="entry name" value="EFG_IV"/>
    <property type="match status" value="1"/>
</dbReference>
<dbReference type="SUPFAM" id="SSF54980">
    <property type="entry name" value="EF-G C-terminal domain-like"/>
    <property type="match status" value="2"/>
</dbReference>
<dbReference type="SUPFAM" id="SSF52540">
    <property type="entry name" value="P-loop containing nucleoside triphosphate hydrolases"/>
    <property type="match status" value="1"/>
</dbReference>
<dbReference type="SUPFAM" id="SSF54211">
    <property type="entry name" value="Ribosomal protein S5 domain 2-like"/>
    <property type="match status" value="1"/>
</dbReference>
<dbReference type="SUPFAM" id="SSF50447">
    <property type="entry name" value="Translation proteins"/>
    <property type="match status" value="1"/>
</dbReference>
<dbReference type="PROSITE" id="PS00301">
    <property type="entry name" value="G_TR_1"/>
    <property type="match status" value="1"/>
</dbReference>
<dbReference type="PROSITE" id="PS51722">
    <property type="entry name" value="G_TR_2"/>
    <property type="match status" value="1"/>
</dbReference>